<protein>
    <recommendedName>
        <fullName>3-carboxy-cis,cis-muconate cycloisomerase</fullName>
        <ecNumber>5.5.1.2</ecNumber>
    </recommendedName>
    <alternativeName>
        <fullName>3-carboxymuconate lactonizing enzyme</fullName>
        <shortName>CMLE</shortName>
    </alternativeName>
</protein>
<dbReference type="EC" id="5.5.1.2"/>
<dbReference type="EMBL" id="L17082">
    <property type="protein sequence ID" value="AAA25920.1"/>
    <property type="status" value="ALT_FRAME"/>
    <property type="molecule type" value="Genomic_DNA"/>
</dbReference>
<dbReference type="PIR" id="A44374">
    <property type="entry name" value="A44374"/>
</dbReference>
<dbReference type="SMR" id="P32427"/>
<dbReference type="DrugBank" id="DB04447">
    <property type="generic name" value="1,4-Dithiothreitol"/>
</dbReference>
<dbReference type="DrugBank" id="DB04272">
    <property type="generic name" value="Citric acid"/>
</dbReference>
<dbReference type="eggNOG" id="COG0015">
    <property type="taxonomic scope" value="Bacteria"/>
</dbReference>
<dbReference type="BioCyc" id="MetaCyc:MONOMER-3222"/>
<dbReference type="SABIO-RK" id="P32427"/>
<dbReference type="UniPathway" id="UPA00157">
    <property type="reaction ID" value="UER00265"/>
</dbReference>
<dbReference type="GO" id="GO:0005737">
    <property type="term" value="C:cytoplasm"/>
    <property type="evidence" value="ECO:0007669"/>
    <property type="project" value="UniProtKB-SubCell"/>
</dbReference>
<dbReference type="GO" id="GO:0047472">
    <property type="term" value="F:3-carboxy-cis,cis-muconate cycloisomerase activity"/>
    <property type="evidence" value="ECO:0007669"/>
    <property type="project" value="UniProtKB-EC"/>
</dbReference>
<dbReference type="GO" id="GO:0016829">
    <property type="term" value="F:lyase activity"/>
    <property type="evidence" value="ECO:0007669"/>
    <property type="project" value="UniProtKB-ARBA"/>
</dbReference>
<dbReference type="GO" id="GO:0019619">
    <property type="term" value="P:3,4-dihydroxybenzoate catabolic process"/>
    <property type="evidence" value="ECO:0007669"/>
    <property type="project" value="InterPro"/>
</dbReference>
<dbReference type="GO" id="GO:0042952">
    <property type="term" value="P:beta-ketoadipate pathway"/>
    <property type="evidence" value="ECO:0007669"/>
    <property type="project" value="UniProtKB-UniPathway"/>
</dbReference>
<dbReference type="CDD" id="cd01597">
    <property type="entry name" value="pCLME"/>
    <property type="match status" value="1"/>
</dbReference>
<dbReference type="FunFam" id="1.20.200.10:FF:000014">
    <property type="entry name" value="3-carboxy-cis,cis-muconate cycloisomerase"/>
    <property type="match status" value="1"/>
</dbReference>
<dbReference type="Gene3D" id="1.10.40.30">
    <property type="entry name" value="Fumarase/aspartase (C-terminal domain)"/>
    <property type="match status" value="1"/>
</dbReference>
<dbReference type="Gene3D" id="1.20.200.10">
    <property type="entry name" value="Fumarase/aspartase (Central domain)"/>
    <property type="match status" value="1"/>
</dbReference>
<dbReference type="InterPro" id="IPR019468">
    <property type="entry name" value="AdenyloSucc_lyase_C"/>
</dbReference>
<dbReference type="InterPro" id="IPR020557">
    <property type="entry name" value="Fumarate_lyase_CS"/>
</dbReference>
<dbReference type="InterPro" id="IPR000362">
    <property type="entry name" value="Fumarate_lyase_fam"/>
</dbReference>
<dbReference type="InterPro" id="IPR022761">
    <property type="entry name" value="Fumarate_lyase_N"/>
</dbReference>
<dbReference type="InterPro" id="IPR008948">
    <property type="entry name" value="L-Aspartase-like"/>
</dbReference>
<dbReference type="InterPro" id="IPR012789">
    <property type="entry name" value="Protocat_PcaB-like"/>
</dbReference>
<dbReference type="NCBIfam" id="NF006554">
    <property type="entry name" value="PRK09053.1"/>
    <property type="match status" value="1"/>
</dbReference>
<dbReference type="NCBIfam" id="TIGR02426">
    <property type="entry name" value="protocat_pcaB"/>
    <property type="match status" value="1"/>
</dbReference>
<dbReference type="PANTHER" id="PTHR43172">
    <property type="entry name" value="ADENYLOSUCCINATE LYASE"/>
    <property type="match status" value="1"/>
</dbReference>
<dbReference type="PANTHER" id="PTHR43172:SF2">
    <property type="entry name" value="ADENYLOSUCCINATE LYASE C-TERMINAL DOMAIN-CONTAINING PROTEIN"/>
    <property type="match status" value="1"/>
</dbReference>
<dbReference type="Pfam" id="PF10397">
    <property type="entry name" value="ADSL_C"/>
    <property type="match status" value="1"/>
</dbReference>
<dbReference type="Pfam" id="PF00206">
    <property type="entry name" value="Lyase_1"/>
    <property type="match status" value="1"/>
</dbReference>
<dbReference type="PRINTS" id="PR00145">
    <property type="entry name" value="ARGSUCLYASE"/>
</dbReference>
<dbReference type="PRINTS" id="PR00149">
    <property type="entry name" value="FUMRATELYASE"/>
</dbReference>
<dbReference type="SMART" id="SM00998">
    <property type="entry name" value="ADSL_C"/>
    <property type="match status" value="1"/>
</dbReference>
<dbReference type="SUPFAM" id="SSF48557">
    <property type="entry name" value="L-aspartase-like"/>
    <property type="match status" value="1"/>
</dbReference>
<dbReference type="PROSITE" id="PS00163">
    <property type="entry name" value="FUMARATE_LYASES"/>
    <property type="match status" value="1"/>
</dbReference>
<comment type="function">
    <text>Catalyzes an anti cycloisomerization.</text>
</comment>
<comment type="catalytic activity">
    <reaction>
        <text>2-(carboxymethyl)-5-oxo-2,5-dihydro-2-furoate = 3-carboxy-cis,cis-muconate + H(+)</text>
        <dbReference type="Rhea" id="RHEA:23656"/>
        <dbReference type="ChEBI" id="CHEBI:15378"/>
        <dbReference type="ChEBI" id="CHEBI:57496"/>
        <dbReference type="ChEBI" id="CHEBI:57979"/>
        <dbReference type="EC" id="5.5.1.2"/>
    </reaction>
</comment>
<comment type="pathway">
    <text>Aromatic compound metabolism; beta-ketoadipate pathway; 5-oxo-4,5-dihydro-2-furylacetate from 3-carboxy-cis,cis-muconate: step 1/2.</text>
</comment>
<comment type="subunit">
    <text>Homotetramer.</text>
</comment>
<comment type="subcellular location">
    <subcellularLocation>
        <location>Cytoplasm</location>
    </subcellularLocation>
</comment>
<comment type="similarity">
    <text evidence="1">Belongs to the class-II fumarase/aspartase family.</text>
</comment>
<comment type="sequence caution" evidence="1">
    <conflict type="frameshift">
        <sequence resource="EMBL-CDS" id="AAA25920"/>
    </conflict>
</comment>
<keyword id="KW-0058">Aromatic hydrocarbons catabolism</keyword>
<keyword id="KW-0963">Cytoplasm</keyword>
<keyword id="KW-0903">Direct protein sequencing</keyword>
<keyword id="KW-0413">Isomerase</keyword>
<sequence>MTNQLFDAYFTAPAMREIFSDRGRLQGMLDFEAALARAEAAAGLVPHSAVAAIEAACKAERYDVGALANAIATAGNSAIPLVKALGKVIASGVPEAERYVHLGATSQDAMDTGLVLQLRDALDLIEADLGKLADTLSQQALKHADTPMVGRTWLQHATPVTLGMKLAGVLGALTRHRQRLQELGPPCWCCSSGGASGSLAALGSKAMPVAEALAEQLKLSLPEQPWHTQRDRLVEFASVLGLVAGSLGKFGRDVSLLMQTEAGEVFEPSAPGKGGSSTMPHKRNPVGAAVLIGAATRVPGLVSTLFAAMPQEHERSLGLWHAEWETLPDICCLVSGALRQAQVIAEGIEVDAARMRRNLDLTQGLVLAEAVSIVLARTLGRDRAHHLLEQCCQRAVAEQRHLRAVLGDDPQVSAELSAEELD</sequence>
<feature type="chain" id="PRO_0000161349" description="3-carboxy-cis,cis-muconate cycloisomerase">
    <location>
        <begin position="1"/>
        <end position="422" status="greater than"/>
    </location>
</feature>
<feature type="non-terminal residue">
    <location>
        <position position="422"/>
    </location>
</feature>
<reference key="1">
    <citation type="journal article" date="1992" name="Biochemistry">
        <title>3-carboxy-cis,cis-muconate lactonizing enzyme from Pseudomonas putida is homologous to the class II fumarase family: a new reaction in the evolution of a mechanistic motif.</title>
        <authorList>
            <person name="Williams S.E."/>
            <person name="Woolridge E.M."/>
            <person name="Ransom S.C."/>
            <person name="Landro J.A."/>
            <person name="Babbitt P.C."/>
            <person name="Kozarich J.W."/>
        </authorList>
    </citation>
    <scope>NUCLEOTIDE SEQUENCE [GENOMIC DNA]</scope>
    <scope>PROTEIN SEQUENCE OF 1-15</scope>
    <source>
        <strain>PRS2000</strain>
    </source>
</reference>
<name>PCAB_PSEPU</name>
<organism>
    <name type="scientific">Pseudomonas putida</name>
    <name type="common">Arthrobacter siderocapsulatus</name>
    <dbReference type="NCBI Taxonomy" id="303"/>
    <lineage>
        <taxon>Bacteria</taxon>
        <taxon>Pseudomonadati</taxon>
        <taxon>Pseudomonadota</taxon>
        <taxon>Gammaproteobacteria</taxon>
        <taxon>Pseudomonadales</taxon>
        <taxon>Pseudomonadaceae</taxon>
        <taxon>Pseudomonas</taxon>
    </lineage>
</organism>
<proteinExistence type="evidence at protein level"/>
<gene>
    <name type="primary">pcaB</name>
</gene>
<accession>P32427</accession>
<accession>Q59703</accession>
<evidence type="ECO:0000305" key="1"/>